<protein>
    <recommendedName>
        <fullName>Achaete-scute homolog 2</fullName>
    </recommendedName>
    <alternativeName>
        <fullName>Mash2</fullName>
    </alternativeName>
</protein>
<proteinExistence type="evidence at protein level"/>
<dbReference type="EMBL" id="X53724">
    <property type="protein sequence ID" value="CAA37759.1"/>
    <property type="molecule type" value="mRNA"/>
</dbReference>
<dbReference type="PIR" id="S11562">
    <property type="entry name" value="S11562"/>
</dbReference>
<dbReference type="RefSeq" id="NP_113691.1">
    <property type="nucleotide sequence ID" value="NM_031503.3"/>
</dbReference>
<dbReference type="SMR" id="P19360"/>
<dbReference type="FunCoup" id="P19360">
    <property type="interactions" value="51"/>
</dbReference>
<dbReference type="STRING" id="10116.ENSRNOP00000027688"/>
<dbReference type="PhosphoSitePlus" id="P19360"/>
<dbReference type="PaxDb" id="10116-ENSRNOP00000027688"/>
<dbReference type="Ensembl" id="ENSRNOT00000027688.5">
    <property type="protein sequence ID" value="ENSRNOP00000027688.2"/>
    <property type="gene ID" value="ENSRNOG00000020434.5"/>
</dbReference>
<dbReference type="GeneID" id="24209"/>
<dbReference type="KEGG" id="rno:24209"/>
<dbReference type="UCSC" id="RGD:2159">
    <property type="organism name" value="rat"/>
</dbReference>
<dbReference type="AGR" id="RGD:2159"/>
<dbReference type="CTD" id="430"/>
<dbReference type="RGD" id="2159">
    <property type="gene designation" value="Ascl2"/>
</dbReference>
<dbReference type="eggNOG" id="KOG4029">
    <property type="taxonomic scope" value="Eukaryota"/>
</dbReference>
<dbReference type="GeneTree" id="ENSGT00940000163041"/>
<dbReference type="HOGENOM" id="CLU_063523_3_0_1"/>
<dbReference type="InParanoid" id="P19360"/>
<dbReference type="OMA" id="ACPRESC"/>
<dbReference type="OrthoDB" id="5976910at2759"/>
<dbReference type="PhylomeDB" id="P19360"/>
<dbReference type="TreeFam" id="TF322889"/>
<dbReference type="PRO" id="PR:P19360"/>
<dbReference type="Proteomes" id="UP000002494">
    <property type="component" value="Chromosome 1"/>
</dbReference>
<dbReference type="Bgee" id="ENSRNOG00000020434">
    <property type="expression patterns" value="Expressed in jejunum and 10 other cell types or tissues"/>
</dbReference>
<dbReference type="GO" id="GO:0005737">
    <property type="term" value="C:cytoplasm"/>
    <property type="evidence" value="ECO:0000266"/>
    <property type="project" value="RGD"/>
</dbReference>
<dbReference type="GO" id="GO:0005634">
    <property type="term" value="C:nucleus"/>
    <property type="evidence" value="ECO:0000266"/>
    <property type="project" value="RGD"/>
</dbReference>
<dbReference type="GO" id="GO:0090575">
    <property type="term" value="C:RNA polymerase II transcription regulator complex"/>
    <property type="evidence" value="ECO:0000318"/>
    <property type="project" value="GO_Central"/>
</dbReference>
<dbReference type="GO" id="GO:0043425">
    <property type="term" value="F:bHLH transcription factor binding"/>
    <property type="evidence" value="ECO:0000266"/>
    <property type="project" value="RGD"/>
</dbReference>
<dbReference type="GO" id="GO:0001228">
    <property type="term" value="F:DNA-binding transcription activator activity, RNA polymerase II-specific"/>
    <property type="evidence" value="ECO:0000266"/>
    <property type="project" value="RGD"/>
</dbReference>
<dbReference type="GO" id="GO:0003700">
    <property type="term" value="F:DNA-binding transcription factor activity"/>
    <property type="evidence" value="ECO:0000314"/>
    <property type="project" value="RGD"/>
</dbReference>
<dbReference type="GO" id="GO:0000981">
    <property type="term" value="F:DNA-binding transcription factor activity, RNA polymerase II-specific"/>
    <property type="evidence" value="ECO:0000318"/>
    <property type="project" value="GO_Central"/>
</dbReference>
<dbReference type="GO" id="GO:0001227">
    <property type="term" value="F:DNA-binding transcription repressor activity, RNA polymerase II-specific"/>
    <property type="evidence" value="ECO:0000266"/>
    <property type="project" value="RGD"/>
</dbReference>
<dbReference type="GO" id="GO:0070888">
    <property type="term" value="F:E-box binding"/>
    <property type="evidence" value="ECO:0000266"/>
    <property type="project" value="RGD"/>
</dbReference>
<dbReference type="GO" id="GO:0046983">
    <property type="term" value="F:protein dimerization activity"/>
    <property type="evidence" value="ECO:0007669"/>
    <property type="project" value="InterPro"/>
</dbReference>
<dbReference type="GO" id="GO:0000978">
    <property type="term" value="F:RNA polymerase II cis-regulatory region sequence-specific DNA binding"/>
    <property type="evidence" value="ECO:0000266"/>
    <property type="project" value="RGD"/>
</dbReference>
<dbReference type="GO" id="GO:0000977">
    <property type="term" value="F:RNA polymerase II transcription regulatory region sequence-specific DNA binding"/>
    <property type="evidence" value="ECO:0000266"/>
    <property type="project" value="RGD"/>
</dbReference>
<dbReference type="GO" id="GO:0043565">
    <property type="term" value="F:sequence-specific DNA binding"/>
    <property type="evidence" value="ECO:0000266"/>
    <property type="project" value="RGD"/>
</dbReference>
<dbReference type="GO" id="GO:1990837">
    <property type="term" value="F:sequence-specific double-stranded DNA binding"/>
    <property type="evidence" value="ECO:0000266"/>
    <property type="project" value="RGD"/>
</dbReference>
<dbReference type="GO" id="GO:0030154">
    <property type="term" value="P:cell differentiation"/>
    <property type="evidence" value="ECO:0000266"/>
    <property type="project" value="RGD"/>
</dbReference>
<dbReference type="GO" id="GO:0060719">
    <property type="term" value="P:chorionic trophoblast cell development"/>
    <property type="evidence" value="ECO:0000266"/>
    <property type="project" value="RGD"/>
</dbReference>
<dbReference type="GO" id="GO:0001701">
    <property type="term" value="P:in utero embryonic development"/>
    <property type="evidence" value="ECO:0000266"/>
    <property type="project" value="RGD"/>
</dbReference>
<dbReference type="GO" id="GO:0010626">
    <property type="term" value="P:negative regulation of Schwann cell proliferation"/>
    <property type="evidence" value="ECO:0000314"/>
    <property type="project" value="RGD"/>
</dbReference>
<dbReference type="GO" id="GO:0045626">
    <property type="term" value="P:negative regulation of T-helper 1 cell differentiation"/>
    <property type="evidence" value="ECO:0000266"/>
    <property type="project" value="RGD"/>
</dbReference>
<dbReference type="GO" id="GO:2000320">
    <property type="term" value="P:negative regulation of T-helper 17 cell differentiation"/>
    <property type="evidence" value="ECO:0000266"/>
    <property type="project" value="RGD"/>
</dbReference>
<dbReference type="GO" id="GO:0045629">
    <property type="term" value="P:negative regulation of T-helper 2 cell differentiation"/>
    <property type="evidence" value="ECO:0000266"/>
    <property type="project" value="RGD"/>
</dbReference>
<dbReference type="GO" id="GO:0000122">
    <property type="term" value="P:negative regulation of transcription by RNA polymerase II"/>
    <property type="evidence" value="ECO:0000266"/>
    <property type="project" value="RGD"/>
</dbReference>
<dbReference type="GO" id="GO:0030182">
    <property type="term" value="P:neuron differentiation"/>
    <property type="evidence" value="ECO:0000318"/>
    <property type="project" value="GO_Central"/>
</dbReference>
<dbReference type="GO" id="GO:0001890">
    <property type="term" value="P:placenta development"/>
    <property type="evidence" value="ECO:0000266"/>
    <property type="project" value="RGD"/>
</dbReference>
<dbReference type="GO" id="GO:2000406">
    <property type="term" value="P:positive regulation of T cell migration"/>
    <property type="evidence" value="ECO:0000266"/>
    <property type="project" value="RGD"/>
</dbReference>
<dbReference type="GO" id="GO:0045944">
    <property type="term" value="P:positive regulation of transcription by RNA polymerase II"/>
    <property type="evidence" value="ECO:0000266"/>
    <property type="project" value="RGD"/>
</dbReference>
<dbReference type="GO" id="GO:0050767">
    <property type="term" value="P:regulation of neurogenesis"/>
    <property type="evidence" value="ECO:0000318"/>
    <property type="project" value="GO_Central"/>
</dbReference>
<dbReference type="GO" id="GO:0006357">
    <property type="term" value="P:regulation of transcription by RNA polymerase II"/>
    <property type="evidence" value="ECO:0000266"/>
    <property type="project" value="RGD"/>
</dbReference>
<dbReference type="GO" id="GO:0001666">
    <property type="term" value="P:response to hypoxia"/>
    <property type="evidence" value="ECO:0000266"/>
    <property type="project" value="RGD"/>
</dbReference>
<dbReference type="GO" id="GO:0007423">
    <property type="term" value="P:sensory organ development"/>
    <property type="evidence" value="ECO:0000318"/>
    <property type="project" value="GO_Central"/>
</dbReference>
<dbReference type="GO" id="GO:0035019">
    <property type="term" value="P:somatic stem cell population maintenance"/>
    <property type="evidence" value="ECO:0000266"/>
    <property type="project" value="RGD"/>
</dbReference>
<dbReference type="GO" id="GO:0060708">
    <property type="term" value="P:spongiotrophoblast differentiation"/>
    <property type="evidence" value="ECO:0000266"/>
    <property type="project" value="RGD"/>
</dbReference>
<dbReference type="GO" id="GO:0060712">
    <property type="term" value="P:spongiotrophoblast layer development"/>
    <property type="evidence" value="ECO:0000266"/>
    <property type="project" value="RGD"/>
</dbReference>
<dbReference type="GO" id="GO:0019827">
    <property type="term" value="P:stem cell population maintenance"/>
    <property type="evidence" value="ECO:0000266"/>
    <property type="project" value="RGD"/>
</dbReference>
<dbReference type="GO" id="GO:0030217">
    <property type="term" value="P:T cell differentiation"/>
    <property type="evidence" value="ECO:0000266"/>
    <property type="project" value="RGD"/>
</dbReference>
<dbReference type="GO" id="GO:0061470">
    <property type="term" value="P:T follicular helper cell differentiation"/>
    <property type="evidence" value="ECO:0000266"/>
    <property type="project" value="RGD"/>
</dbReference>
<dbReference type="CDD" id="cd19743">
    <property type="entry name" value="bHLH_TS_ASCL2_Mash2"/>
    <property type="match status" value="1"/>
</dbReference>
<dbReference type="FunFam" id="4.10.280.10:FF:000029">
    <property type="entry name" value="Achaete-scute family bHLH transcription factor 1"/>
    <property type="match status" value="1"/>
</dbReference>
<dbReference type="Gene3D" id="4.10.280.10">
    <property type="entry name" value="Helix-loop-helix DNA-binding domain"/>
    <property type="match status" value="1"/>
</dbReference>
<dbReference type="InterPro" id="IPR011598">
    <property type="entry name" value="bHLH_dom"/>
</dbReference>
<dbReference type="InterPro" id="IPR036638">
    <property type="entry name" value="HLH_DNA-bd_sf"/>
</dbReference>
<dbReference type="InterPro" id="IPR015660">
    <property type="entry name" value="MASH1/Ascl1a-like"/>
</dbReference>
<dbReference type="PANTHER" id="PTHR13935:SF62">
    <property type="entry name" value="ACHAETE-SCUTE HOMOLOG 2"/>
    <property type="match status" value="1"/>
</dbReference>
<dbReference type="PANTHER" id="PTHR13935">
    <property type="entry name" value="ACHAETE-SCUTE TRANSCRIPTION FACTOR-RELATED"/>
    <property type="match status" value="1"/>
</dbReference>
<dbReference type="Pfam" id="PF00010">
    <property type="entry name" value="HLH"/>
    <property type="match status" value="1"/>
</dbReference>
<dbReference type="SMART" id="SM00353">
    <property type="entry name" value="HLH"/>
    <property type="match status" value="1"/>
</dbReference>
<dbReference type="SUPFAM" id="SSF47459">
    <property type="entry name" value="HLH, helix-loop-helix DNA-binding domain"/>
    <property type="match status" value="1"/>
</dbReference>
<dbReference type="PROSITE" id="PS50888">
    <property type="entry name" value="BHLH"/>
    <property type="match status" value="1"/>
</dbReference>
<gene>
    <name type="primary">Ascl2</name>
    <name type="synonym">Ash2</name>
    <name type="synonym">Mash-2</name>
    <name type="synonym">Mash2</name>
</gene>
<reference key="1">
    <citation type="journal article" date="1990" name="Nature">
        <title>Two rat homologues of Drosophila achaete-scute specifically expressed in neuronal precursors.</title>
        <authorList>
            <person name="Johnson J.E."/>
            <person name="Birren S.J."/>
            <person name="Anderson D.J."/>
        </authorList>
    </citation>
    <scope>NUCLEOTIDE SEQUENCE [MRNA]</scope>
    <scope>FUNCTION</scope>
    <scope>TISSUE SPECIFICITY</scope>
    <source>
        <strain>Sprague-Dawley</strain>
    </source>
</reference>
<reference key="2">
    <citation type="journal article" date="1992" name="Proc. Natl. Acad. Sci. U.S.A.">
        <title>DNA binding and transcriptional regulatory activity of mammalian achaete-scute homologous (MASH) proteins revealed by interaction with a muscle-specific enhancer.</title>
        <authorList>
            <person name="Johnson J.E."/>
            <person name="Birren S.J."/>
            <person name="Saito T."/>
            <person name="Anderson D.J."/>
        </authorList>
    </citation>
    <scope>FUNCTION</scope>
    <scope>SUBUNIT</scope>
</reference>
<reference key="3">
    <citation type="journal article" date="2002" name="J. Neurosci.">
        <title>Mammalian achaete scute homolog 2 is expressed in the adult sciatic nerve and regulates the expression of Krox24, Mob-1, CXCR4, and p57kip2 in Schwann cells.</title>
        <authorList>
            <person name="Kuery P."/>
            <person name="Greiner-Petter R."/>
            <person name="Cornely C."/>
            <person name="Juergens T."/>
            <person name="Mueller H.W."/>
        </authorList>
    </citation>
    <scope>FUNCTION</scope>
    <scope>SUBCELLULAR LOCATION</scope>
    <scope>TISSUE SPECIFICITY</scope>
    <scope>DEVELOPMENTAL STAGE</scope>
    <scope>INDUCTION</scope>
</reference>
<name>ASCL2_RAT</name>
<accession>P19360</accession>
<evidence type="ECO:0000250" key="1">
    <source>
        <dbReference type="UniProtKB" id="O35885"/>
    </source>
</evidence>
<evidence type="ECO:0000255" key="2">
    <source>
        <dbReference type="PROSITE-ProRule" id="PRU00981"/>
    </source>
</evidence>
<evidence type="ECO:0000256" key="3">
    <source>
        <dbReference type="SAM" id="MobiDB-lite"/>
    </source>
</evidence>
<evidence type="ECO:0000269" key="4">
    <source>
    </source>
</evidence>
<evidence type="ECO:0000269" key="5">
    <source>
    </source>
</evidence>
<evidence type="ECO:0000269" key="6">
    <source>
    </source>
</evidence>
<feature type="chain" id="PRO_0000127132" description="Achaete-scute homolog 2">
    <location>
        <begin position="1"/>
        <end position="260"/>
    </location>
</feature>
<feature type="domain" description="bHLH" evidence="2">
    <location>
        <begin position="118"/>
        <end position="170"/>
    </location>
</feature>
<feature type="region of interest" description="Disordered" evidence="3">
    <location>
        <begin position="85"/>
        <end position="126"/>
    </location>
</feature>
<feature type="region of interest" description="Disordered" evidence="3">
    <location>
        <begin position="191"/>
        <end position="239"/>
    </location>
</feature>
<feature type="compositionally biased region" description="Low complexity" evidence="3">
    <location>
        <begin position="110"/>
        <end position="121"/>
    </location>
</feature>
<feature type="compositionally biased region" description="Low complexity" evidence="3">
    <location>
        <begin position="200"/>
        <end position="218"/>
    </location>
</feature>
<organism>
    <name type="scientific">Rattus norvegicus</name>
    <name type="common">Rat</name>
    <dbReference type="NCBI Taxonomy" id="10116"/>
    <lineage>
        <taxon>Eukaryota</taxon>
        <taxon>Metazoa</taxon>
        <taxon>Chordata</taxon>
        <taxon>Craniata</taxon>
        <taxon>Vertebrata</taxon>
        <taxon>Euteleostomi</taxon>
        <taxon>Mammalia</taxon>
        <taxon>Eutheria</taxon>
        <taxon>Euarchontoglires</taxon>
        <taxon>Glires</taxon>
        <taxon>Rodentia</taxon>
        <taxon>Myomorpha</taxon>
        <taxon>Muroidea</taxon>
        <taxon>Muridae</taxon>
        <taxon>Murinae</taxon>
        <taxon>Rattus</taxon>
    </lineage>
</organism>
<sequence>MESHFNWYGVPRLQKASDACPRESCSSALPEAREGANVHFPPHPVPREHFSCGAPKPVAGAPALNASLMDGGALPRLVPTSSGVAGACTARRRPPSPELLRCSRRRRSGATEASSSSAAVARRNERERNRVKLVNLGFQALRQHVPHGGANKKLSKVETLRSAVEYIRALQRLLAEHDAVRAALSGGLLTPATRPSDVCTQPSASPASASLSCTSTSPDRLGCSEPASPRSAYSSEDSSCEGETYPMGQMFDFSNWLGGY</sequence>
<comment type="function">
    <text evidence="1 4 5 6">Transcription factor (PubMed:1314394). Binds to E-box motifs 5'-CANNTG-3' in the regulatory elements of target genes, probably as a heterodimer with another basic helix-loop-helix (bHLH) protein such as the transcription factor TCF3. May bind both open and closed chromatin, acting as a pioneer transcription factor to allow other factors to bind and activate lineage-specific genes. Required during post-implantation development for the generation of some differentiated trophoblast cell types. Transcriptional activity of ASCL2 may be antagonised in a subset of trophoblast cells by bHLH transcription factor HAND1, perhaps by competing for dimerization with other bHLH proteins. Involved in differentiation and function of follicular T-helper (Tfh) cells, thereby playing a role in germinal center responses; probably modulates expression of genes involved in Tfh cell function, such as BCL6. May also act as a suppressor of Th1-, Th2- and Th17-cell differentiation. Induces the formation of stem cells in intestinal crypts in vitro, synergistically activating transcription of target genes, such as SOX9, together with TCF4/beta-catenin. May form a bistable transcriptional switch, controlling expression of its own gene together with Wnt/R-spondin signaling, and thereby maintaining stem cell characteristics (By similarity). Modulates expression of target genes, including perhaps down-regulating EGR1/Krox24 and chemokine CXCL10/Mob-1 and up-regulating CXCR4 and CDKN1C/p57kip2, in Schwann cells (PubMed:12196582). May play a role in reducing proliferation of Schwann cells, perhaps acting via modulation of expression of CDKN1C (PubMed:12196582). May be dispensable for blastocyst formation and later embryonic function (By similarity). May be involved in the determination of neuronal precursors (PubMed:2392153).</text>
</comment>
<comment type="subunit">
    <text evidence="1 5">Efficient DNA binding requires dimerization with another bHLH protein (PubMed:1314394). Forms heterodimers with bHLH transcription factor TCF3 (PubMed:1314394). May not heterodimerise with bHLH protein HAND1 (By similarity).</text>
</comment>
<comment type="subcellular location">
    <subcellularLocation>
        <location evidence="2 4">Nucleus</location>
    </subcellularLocation>
    <subcellularLocation>
        <location evidence="4">Cytoplasm</location>
    </subcellularLocation>
</comment>
<comment type="tissue specificity">
    <text evidence="4 6">Expressed in Schwann cells in the peripheral nerve (at protein level) (PubMed:12196582). Also expressed by endothelial cells (at protein level) (PubMed:12196582). May be expressed in neuronal precursor cells (PubMed:2392153).</text>
</comment>
<comment type="developmental stage">
    <text evidence="4">Expressed at embryonic day 15.5 (dpc) in placenta (at protein level).</text>
</comment>
<comment type="induction">
    <text evidence="4">Transiently repressed after nerve injury.</text>
</comment>
<keyword id="KW-0963">Cytoplasm</keyword>
<keyword id="KW-0217">Developmental protein</keyword>
<keyword id="KW-0221">Differentiation</keyword>
<keyword id="KW-0238">DNA-binding</keyword>
<keyword id="KW-0524">Neurogenesis</keyword>
<keyword id="KW-0539">Nucleus</keyword>
<keyword id="KW-1185">Reference proteome</keyword>